<sequence length="618" mass="68309">MRATAAYVGMLRLGRMCAGSPGVLGARAALSRSWQEARLQAVRFLSSREVDRMVPLPVGGLSYVQGCTKNHLLSKTVGRCLEATAQRVPEREALVDLHENIRLTFAQLKEEVDKAASGLLSIGLCKGDRLGMWGPNSYAWVLIQLATAQAGIILVSVNPAYQATELEYVLKKVGCKALVFPKQFKTQQYYNILKQICPEVENAQPGALKSQRLPDLTTVISVDAPLPGTLLLDEVLAAGSTQQHLEQLQHIQQFLSCHDPINIQFTSGTTGSPKGATLSHYNIVNNSSILGERLKLHEKTPEQLRMILPSPLYHCLGSVGGTMMCLMYGATLILASPVFNGKKALEAISRERGSFLYGTPTMFVDILNQPDFSSYDISTMRGGVIAGSPAPPELIRAIINKINMKDLVVAYGTTENSPVTFANFPEDTVEQKAESVGRIMPHTEARIMNMEAGMLAELNTPGELCIRGYCVMLGYWGEPQKTGEAVDQDKWYRTGDIATMNEQGFCKIVGRSKDMIIRGGENIYPAELEDFFHTHPKVQEVQVVGVKDDRMGEEICACIRLKDGEETTAEEMKAFCKGKISHFKIPRYIVFVTNYPLTTSGKIQKFKLREQMERHLNL</sequence>
<evidence type="ECO:0000250" key="1"/>
<evidence type="ECO:0000250" key="2">
    <source>
        <dbReference type="UniProtKB" id="Q8VCW8"/>
    </source>
</evidence>
<evidence type="ECO:0000250" key="3">
    <source>
        <dbReference type="UniProtKB" id="Q96CM8"/>
    </source>
</evidence>
<evidence type="ECO:0000255" key="4"/>
<evidence type="ECO:0000305" key="5"/>
<accession>Q4R4Z9</accession>
<protein>
    <recommendedName>
        <fullName evidence="3">Medium-chain acyl-CoA ligase ACSF2, mitochondrial</fullName>
        <ecNumber evidence="3">6.2.1.2</ecNumber>
    </recommendedName>
</protein>
<organism>
    <name type="scientific">Macaca fascicularis</name>
    <name type="common">Crab-eating macaque</name>
    <name type="synonym">Cynomolgus monkey</name>
    <dbReference type="NCBI Taxonomy" id="9541"/>
    <lineage>
        <taxon>Eukaryota</taxon>
        <taxon>Metazoa</taxon>
        <taxon>Chordata</taxon>
        <taxon>Craniata</taxon>
        <taxon>Vertebrata</taxon>
        <taxon>Euteleostomi</taxon>
        <taxon>Mammalia</taxon>
        <taxon>Eutheria</taxon>
        <taxon>Euarchontoglires</taxon>
        <taxon>Primates</taxon>
        <taxon>Haplorrhini</taxon>
        <taxon>Catarrhini</taxon>
        <taxon>Cercopithecidae</taxon>
        <taxon>Cercopithecinae</taxon>
        <taxon>Macaca</taxon>
    </lineage>
</organism>
<comment type="function">
    <text evidence="3">Acyl-CoA synthases catalyze the initial reaction in fatty acid metabolism, by forming a thioester with CoA. Has some preference toward medium-chain substrates. Plays a role in adipocyte differentiation.</text>
</comment>
<comment type="catalytic activity">
    <reaction evidence="3">
        <text>a medium-chain fatty acid + ATP + CoA = a medium-chain fatty acyl-CoA + AMP + diphosphate</text>
        <dbReference type="Rhea" id="RHEA:48340"/>
        <dbReference type="ChEBI" id="CHEBI:30616"/>
        <dbReference type="ChEBI" id="CHEBI:33019"/>
        <dbReference type="ChEBI" id="CHEBI:57287"/>
        <dbReference type="ChEBI" id="CHEBI:59558"/>
        <dbReference type="ChEBI" id="CHEBI:90546"/>
        <dbReference type="ChEBI" id="CHEBI:456215"/>
        <dbReference type="EC" id="6.2.1.2"/>
    </reaction>
</comment>
<comment type="catalytic activity">
    <reaction evidence="3">
        <text>octanoate + ATP + CoA = octanoyl-CoA + AMP + diphosphate</text>
        <dbReference type="Rhea" id="RHEA:33631"/>
        <dbReference type="ChEBI" id="CHEBI:25646"/>
        <dbReference type="ChEBI" id="CHEBI:30616"/>
        <dbReference type="ChEBI" id="CHEBI:33019"/>
        <dbReference type="ChEBI" id="CHEBI:57287"/>
        <dbReference type="ChEBI" id="CHEBI:57386"/>
        <dbReference type="ChEBI" id="CHEBI:456215"/>
    </reaction>
</comment>
<comment type="subcellular location">
    <subcellularLocation>
        <location evidence="5">Mitochondrion</location>
    </subcellularLocation>
</comment>
<comment type="similarity">
    <text evidence="5">Belongs to the ATP-dependent AMP-binding enzyme family.</text>
</comment>
<feature type="transit peptide" description="Mitochondrion" evidence="4">
    <location>
        <begin position="1"/>
        <end position="44"/>
    </location>
</feature>
<feature type="chain" id="PRO_0000315794" description="Medium-chain acyl-CoA ligase ACSF2, mitochondrial">
    <location>
        <begin position="45"/>
        <end position="618"/>
    </location>
</feature>
<feature type="binding site" evidence="1">
    <location>
        <begin position="266"/>
        <end position="274"/>
    </location>
    <ligand>
        <name>ATP</name>
        <dbReference type="ChEBI" id="CHEBI:30616"/>
    </ligand>
</feature>
<feature type="binding site" evidence="1">
    <location>
        <position position="496"/>
    </location>
    <ligand>
        <name>ATP</name>
        <dbReference type="ChEBI" id="CHEBI:30616"/>
    </ligand>
</feature>
<feature type="binding site" evidence="1">
    <location>
        <position position="511"/>
    </location>
    <ligand>
        <name>ATP</name>
        <dbReference type="ChEBI" id="CHEBI:30616"/>
    </ligand>
</feature>
<feature type="binding site" evidence="1">
    <location>
        <position position="602"/>
    </location>
    <ligand>
        <name>ATP</name>
        <dbReference type="ChEBI" id="CHEBI:30616"/>
    </ligand>
</feature>
<feature type="modified residue" description="N6-acetyllysine" evidence="2">
    <location>
        <position position="182"/>
    </location>
</feature>
<feature type="modified residue" description="N6-acetyllysine; alternate" evidence="2">
    <location>
        <position position="185"/>
    </location>
</feature>
<feature type="modified residue" description="N6-succinyllysine; alternate" evidence="2">
    <location>
        <position position="185"/>
    </location>
</feature>
<feature type="modified residue" description="N6-acetyllysine" evidence="2">
    <location>
        <position position="343"/>
    </location>
</feature>
<feature type="modified residue" description="N6-acetyllysine" evidence="2">
    <location>
        <position position="401"/>
    </location>
</feature>
<feature type="modified residue" description="N6-succinyllysine" evidence="2">
    <location>
        <position position="481"/>
    </location>
</feature>
<feature type="modified residue" description="N6-acetyllysine" evidence="2">
    <location>
        <position position="513"/>
    </location>
</feature>
<feature type="modified residue" description="N6-acetyllysine; alternate" evidence="2">
    <location>
        <position position="547"/>
    </location>
</feature>
<feature type="modified residue" description="N6-succinyllysine; alternate" evidence="2">
    <location>
        <position position="547"/>
    </location>
</feature>
<feature type="modified residue" description="N6-acetyllysine; alternate" evidence="2">
    <location>
        <position position="573"/>
    </location>
</feature>
<feature type="modified residue" description="N6-succinyllysine; alternate" evidence="2">
    <location>
        <position position="573"/>
    </location>
</feature>
<feature type="modified residue" description="N6-succinyllysine" evidence="2">
    <location>
        <position position="602"/>
    </location>
</feature>
<name>ACSF2_MACFA</name>
<dbReference type="EC" id="6.2.1.2" evidence="3"/>
<dbReference type="EMBL" id="AB169745">
    <property type="protein sequence ID" value="BAE01826.1"/>
    <property type="molecule type" value="mRNA"/>
</dbReference>
<dbReference type="RefSeq" id="NP_001270429.1">
    <property type="nucleotide sequence ID" value="NM_001283500.1"/>
</dbReference>
<dbReference type="RefSeq" id="XP_045231961.2">
    <property type="nucleotide sequence ID" value="XM_045376026.2"/>
</dbReference>
<dbReference type="SMR" id="Q4R4Z9"/>
<dbReference type="STRING" id="9541.ENSMFAP00000030084"/>
<dbReference type="GeneID" id="101864763"/>
<dbReference type="eggNOG" id="KOG1177">
    <property type="taxonomic scope" value="Eukaryota"/>
</dbReference>
<dbReference type="OrthoDB" id="10253115at2759"/>
<dbReference type="Proteomes" id="UP000233100">
    <property type="component" value="Unplaced"/>
</dbReference>
<dbReference type="GO" id="GO:0005739">
    <property type="term" value="C:mitochondrion"/>
    <property type="evidence" value="ECO:0007669"/>
    <property type="project" value="UniProtKB-SubCell"/>
</dbReference>
<dbReference type="GO" id="GO:0005524">
    <property type="term" value="F:ATP binding"/>
    <property type="evidence" value="ECO:0007669"/>
    <property type="project" value="UniProtKB-KW"/>
</dbReference>
<dbReference type="GO" id="GO:0031956">
    <property type="term" value="F:medium-chain fatty acid-CoA ligase activity"/>
    <property type="evidence" value="ECO:0000250"/>
    <property type="project" value="UniProtKB"/>
</dbReference>
<dbReference type="GO" id="GO:0006631">
    <property type="term" value="P:fatty acid metabolic process"/>
    <property type="evidence" value="ECO:0007669"/>
    <property type="project" value="UniProtKB-KW"/>
</dbReference>
<dbReference type="CDD" id="cd05917">
    <property type="entry name" value="FACL_like_2"/>
    <property type="match status" value="1"/>
</dbReference>
<dbReference type="FunFam" id="3.30.300.30:FF:000008">
    <property type="entry name" value="2,3-dihydroxybenzoate-AMP ligase"/>
    <property type="match status" value="1"/>
</dbReference>
<dbReference type="FunFam" id="3.40.50.980:FF:000005">
    <property type="entry name" value="Acyl-CoA synthetase family member 2"/>
    <property type="match status" value="1"/>
</dbReference>
<dbReference type="FunFam" id="3.40.50.980:FF:000007">
    <property type="entry name" value="Acyl-CoA synthetase family member 2"/>
    <property type="match status" value="1"/>
</dbReference>
<dbReference type="FunFam" id="3.40.50.12780:FF:000003">
    <property type="entry name" value="Long-chain-fatty-acid--CoA ligase FadD"/>
    <property type="match status" value="1"/>
</dbReference>
<dbReference type="Gene3D" id="3.30.300.30">
    <property type="match status" value="1"/>
</dbReference>
<dbReference type="Gene3D" id="3.40.50.12780">
    <property type="entry name" value="N-terminal domain of ligase-like"/>
    <property type="match status" value="1"/>
</dbReference>
<dbReference type="InterPro" id="IPR025110">
    <property type="entry name" value="AMP-bd_C"/>
</dbReference>
<dbReference type="InterPro" id="IPR045851">
    <property type="entry name" value="AMP-bd_C_sf"/>
</dbReference>
<dbReference type="InterPro" id="IPR020845">
    <property type="entry name" value="AMP-binding_CS"/>
</dbReference>
<dbReference type="InterPro" id="IPR000873">
    <property type="entry name" value="AMP-dep_synth/lig_dom"/>
</dbReference>
<dbReference type="InterPro" id="IPR042099">
    <property type="entry name" value="ANL_N_sf"/>
</dbReference>
<dbReference type="PANTHER" id="PTHR43201">
    <property type="entry name" value="ACYL-COA SYNTHETASE"/>
    <property type="match status" value="1"/>
</dbReference>
<dbReference type="PANTHER" id="PTHR43201:SF5">
    <property type="entry name" value="MEDIUM-CHAIN ACYL-COA LIGASE ACSF2, MITOCHONDRIAL"/>
    <property type="match status" value="1"/>
</dbReference>
<dbReference type="Pfam" id="PF00501">
    <property type="entry name" value="AMP-binding"/>
    <property type="match status" value="1"/>
</dbReference>
<dbReference type="Pfam" id="PF13193">
    <property type="entry name" value="AMP-binding_C"/>
    <property type="match status" value="1"/>
</dbReference>
<dbReference type="SUPFAM" id="SSF56801">
    <property type="entry name" value="Acetyl-CoA synthetase-like"/>
    <property type="match status" value="1"/>
</dbReference>
<dbReference type="PROSITE" id="PS00455">
    <property type="entry name" value="AMP_BINDING"/>
    <property type="match status" value="1"/>
</dbReference>
<reference key="1">
    <citation type="submission" date="2005-06" db="EMBL/GenBank/DDBJ databases">
        <title>DNA sequences of macaque genes expressed in brain or testis and its evolutionary implications.</title>
        <authorList>
            <consortium name="International consortium for macaque cDNA sequencing and analysis"/>
        </authorList>
    </citation>
    <scope>NUCLEOTIDE SEQUENCE [LARGE SCALE MRNA]</scope>
    <source>
        <tissue>Parietal cortex</tissue>
    </source>
</reference>
<proteinExistence type="evidence at transcript level"/>
<keyword id="KW-0007">Acetylation</keyword>
<keyword id="KW-0067">ATP-binding</keyword>
<keyword id="KW-0276">Fatty acid metabolism</keyword>
<keyword id="KW-0436">Ligase</keyword>
<keyword id="KW-0443">Lipid metabolism</keyword>
<keyword id="KW-0496">Mitochondrion</keyword>
<keyword id="KW-0547">Nucleotide-binding</keyword>
<keyword id="KW-1185">Reference proteome</keyword>
<keyword id="KW-0809">Transit peptide</keyword>
<gene>
    <name evidence="3" type="primary">ACSF2</name>
    <name type="ORF">QnpA-14939</name>
</gene>